<comment type="catalytic activity">
    <reaction evidence="1">
        <text>D-arabinose 5-phosphate + phosphoenolpyruvate + H2O = 3-deoxy-alpha-D-manno-2-octulosonate-8-phosphate + phosphate</text>
        <dbReference type="Rhea" id="RHEA:14053"/>
        <dbReference type="ChEBI" id="CHEBI:15377"/>
        <dbReference type="ChEBI" id="CHEBI:43474"/>
        <dbReference type="ChEBI" id="CHEBI:57693"/>
        <dbReference type="ChEBI" id="CHEBI:58702"/>
        <dbReference type="ChEBI" id="CHEBI:85985"/>
        <dbReference type="EC" id="2.5.1.55"/>
    </reaction>
</comment>
<comment type="pathway">
    <text evidence="1">Carbohydrate biosynthesis; 3-deoxy-D-manno-octulosonate biosynthesis; 3-deoxy-D-manno-octulosonate from D-ribulose 5-phosphate: step 2/3.</text>
</comment>
<comment type="pathway">
    <text evidence="1">Bacterial outer membrane biogenesis; lipopolysaccharide biosynthesis.</text>
</comment>
<comment type="subcellular location">
    <subcellularLocation>
        <location evidence="1">Cytoplasm</location>
    </subcellularLocation>
</comment>
<comment type="similarity">
    <text evidence="1">Belongs to the KdsA family.</text>
</comment>
<name>KDSA_BURVG</name>
<dbReference type="EC" id="2.5.1.55" evidence="1"/>
<dbReference type="EMBL" id="CP000614">
    <property type="protein sequence ID" value="ABO55189.1"/>
    <property type="molecule type" value="Genomic_DNA"/>
</dbReference>
<dbReference type="SMR" id="A4JFY6"/>
<dbReference type="KEGG" id="bvi:Bcep1808_2187"/>
<dbReference type="eggNOG" id="COG2877">
    <property type="taxonomic scope" value="Bacteria"/>
</dbReference>
<dbReference type="HOGENOM" id="CLU_036666_0_0_4"/>
<dbReference type="UniPathway" id="UPA00030"/>
<dbReference type="UniPathway" id="UPA00357">
    <property type="reaction ID" value="UER00474"/>
</dbReference>
<dbReference type="Proteomes" id="UP000002287">
    <property type="component" value="Chromosome 1"/>
</dbReference>
<dbReference type="GO" id="GO:0005737">
    <property type="term" value="C:cytoplasm"/>
    <property type="evidence" value="ECO:0007669"/>
    <property type="project" value="UniProtKB-SubCell"/>
</dbReference>
<dbReference type="GO" id="GO:0008676">
    <property type="term" value="F:3-deoxy-8-phosphooctulonate synthase activity"/>
    <property type="evidence" value="ECO:0007669"/>
    <property type="project" value="UniProtKB-UniRule"/>
</dbReference>
<dbReference type="GO" id="GO:0019294">
    <property type="term" value="P:keto-3-deoxy-D-manno-octulosonic acid biosynthetic process"/>
    <property type="evidence" value="ECO:0007669"/>
    <property type="project" value="UniProtKB-UniRule"/>
</dbReference>
<dbReference type="Gene3D" id="3.20.20.70">
    <property type="entry name" value="Aldolase class I"/>
    <property type="match status" value="1"/>
</dbReference>
<dbReference type="HAMAP" id="MF_00056">
    <property type="entry name" value="KDO8P_synth"/>
    <property type="match status" value="1"/>
</dbReference>
<dbReference type="InterPro" id="IPR013785">
    <property type="entry name" value="Aldolase_TIM"/>
</dbReference>
<dbReference type="InterPro" id="IPR006218">
    <property type="entry name" value="DAHP1/KDSA"/>
</dbReference>
<dbReference type="InterPro" id="IPR006269">
    <property type="entry name" value="KDO8P_synthase"/>
</dbReference>
<dbReference type="NCBIfam" id="TIGR01362">
    <property type="entry name" value="KDO8P_synth"/>
    <property type="match status" value="1"/>
</dbReference>
<dbReference type="NCBIfam" id="NF003543">
    <property type="entry name" value="PRK05198.1"/>
    <property type="match status" value="1"/>
</dbReference>
<dbReference type="PANTHER" id="PTHR21057">
    <property type="entry name" value="PHOSPHO-2-DEHYDRO-3-DEOXYHEPTONATE ALDOLASE"/>
    <property type="match status" value="1"/>
</dbReference>
<dbReference type="Pfam" id="PF00793">
    <property type="entry name" value="DAHP_synth_1"/>
    <property type="match status" value="1"/>
</dbReference>
<dbReference type="SUPFAM" id="SSF51569">
    <property type="entry name" value="Aldolase"/>
    <property type="match status" value="1"/>
</dbReference>
<gene>
    <name evidence="1" type="primary">kdsA</name>
    <name type="ordered locus">Bcep1808_2187</name>
</gene>
<sequence>MKLCDFEVGLDQPFFLIAGTCVVESEQMTIDTAGRLKEICAKLNVPFIYKSSYDKANRSSGKSFRGLGMDEGLRILGEVKRQLGLPVLTDVHSIDEIEQVASVVDVLQTPAFLCRQTDFIHACARSGKPVNIKKGQFLAPHDMKNVIDKARDAAREAGLSEDRFMACERGVSFGYNNLVSDMRSLAIMRETNAPVVFDATHSVQLPGGQGTSSGGQREFVPVLARAAVATGVAGLFMETHPNPAEAKSDGPNAVPLHRMGALLETLVTLDQAVKRNPLLENDFN</sequence>
<proteinExistence type="inferred from homology"/>
<protein>
    <recommendedName>
        <fullName evidence="1">2-dehydro-3-deoxyphosphooctonate aldolase</fullName>
        <ecNumber evidence="1">2.5.1.55</ecNumber>
    </recommendedName>
    <alternativeName>
        <fullName evidence="1">3-deoxy-D-manno-octulosonic acid 8-phosphate synthase</fullName>
    </alternativeName>
    <alternativeName>
        <fullName evidence="1">KDO-8-phosphate synthase</fullName>
        <shortName evidence="1">KDO 8-P synthase</shortName>
        <shortName evidence="1">KDOPS</shortName>
    </alternativeName>
    <alternativeName>
        <fullName evidence="1">Phospho-2-dehydro-3-deoxyoctonate aldolase</fullName>
    </alternativeName>
</protein>
<feature type="chain" id="PRO_1000003331" description="2-dehydro-3-deoxyphosphooctonate aldolase">
    <location>
        <begin position="1"/>
        <end position="284"/>
    </location>
</feature>
<keyword id="KW-0963">Cytoplasm</keyword>
<keyword id="KW-0448">Lipopolysaccharide biosynthesis</keyword>
<keyword id="KW-0808">Transferase</keyword>
<accession>A4JFY6</accession>
<evidence type="ECO:0000255" key="1">
    <source>
        <dbReference type="HAMAP-Rule" id="MF_00056"/>
    </source>
</evidence>
<reference key="1">
    <citation type="submission" date="2007-03" db="EMBL/GenBank/DDBJ databases">
        <title>Complete sequence of chromosome 1 of Burkholderia vietnamiensis G4.</title>
        <authorList>
            <consortium name="US DOE Joint Genome Institute"/>
            <person name="Copeland A."/>
            <person name="Lucas S."/>
            <person name="Lapidus A."/>
            <person name="Barry K."/>
            <person name="Detter J.C."/>
            <person name="Glavina del Rio T."/>
            <person name="Hammon N."/>
            <person name="Israni S."/>
            <person name="Dalin E."/>
            <person name="Tice H."/>
            <person name="Pitluck S."/>
            <person name="Chain P."/>
            <person name="Malfatti S."/>
            <person name="Shin M."/>
            <person name="Vergez L."/>
            <person name="Schmutz J."/>
            <person name="Larimer F."/>
            <person name="Land M."/>
            <person name="Hauser L."/>
            <person name="Kyrpides N."/>
            <person name="Tiedje J."/>
            <person name="Richardson P."/>
        </authorList>
    </citation>
    <scope>NUCLEOTIDE SEQUENCE [LARGE SCALE GENOMIC DNA]</scope>
    <source>
        <strain>G4 / LMG 22486</strain>
    </source>
</reference>
<organism>
    <name type="scientific">Burkholderia vietnamiensis (strain G4 / LMG 22486)</name>
    <name type="common">Burkholderia cepacia (strain R1808)</name>
    <dbReference type="NCBI Taxonomy" id="269482"/>
    <lineage>
        <taxon>Bacteria</taxon>
        <taxon>Pseudomonadati</taxon>
        <taxon>Pseudomonadota</taxon>
        <taxon>Betaproteobacteria</taxon>
        <taxon>Burkholderiales</taxon>
        <taxon>Burkholderiaceae</taxon>
        <taxon>Burkholderia</taxon>
        <taxon>Burkholderia cepacia complex</taxon>
    </lineage>
</organism>